<reference key="1">
    <citation type="journal article" date="2007" name="ISME J.">
        <title>Population level functional diversity in a microbial community revealed by comparative genomic and metagenomic analyses.</title>
        <authorList>
            <person name="Bhaya D."/>
            <person name="Grossman A.R."/>
            <person name="Steunou A.-S."/>
            <person name="Khuri N."/>
            <person name="Cohan F.M."/>
            <person name="Hamamura N."/>
            <person name="Melendrez M.C."/>
            <person name="Bateson M.M."/>
            <person name="Ward D.M."/>
            <person name="Heidelberg J.F."/>
        </authorList>
    </citation>
    <scope>NUCLEOTIDE SEQUENCE [LARGE SCALE GENOMIC DNA]</scope>
    <source>
        <strain>JA-2-3B'a(2-13)</strain>
    </source>
</reference>
<keyword id="KW-0028">Amino-acid biosynthesis</keyword>
<keyword id="KW-0100">Branched-chain amino acid biosynthesis</keyword>
<keyword id="KW-0460">Magnesium</keyword>
<keyword id="KW-0479">Metal-binding</keyword>
<keyword id="KW-0521">NADP</keyword>
<keyword id="KW-0560">Oxidoreductase</keyword>
<keyword id="KW-1185">Reference proteome</keyword>
<proteinExistence type="inferred from homology"/>
<organism>
    <name type="scientific">Synechococcus sp. (strain JA-2-3B'a(2-13))</name>
    <name type="common">Cyanobacteria bacterium Yellowstone B-Prime</name>
    <dbReference type="NCBI Taxonomy" id="321332"/>
    <lineage>
        <taxon>Bacteria</taxon>
        <taxon>Bacillati</taxon>
        <taxon>Cyanobacteriota</taxon>
        <taxon>Cyanophyceae</taxon>
        <taxon>Synechococcales</taxon>
        <taxon>Synechococcaceae</taxon>
        <taxon>Synechococcus</taxon>
    </lineage>
</organism>
<name>ILVC_SYNJB</name>
<accession>Q2JKN5</accession>
<feature type="chain" id="PRO_0000252795" description="Ketol-acid reductoisomerase (NADP(+))">
    <location>
        <begin position="1"/>
        <end position="330"/>
    </location>
</feature>
<feature type="domain" description="KARI N-terminal Rossmann" evidence="2">
    <location>
        <begin position="2"/>
        <end position="182"/>
    </location>
</feature>
<feature type="domain" description="KARI C-terminal knotted" evidence="3">
    <location>
        <begin position="183"/>
        <end position="328"/>
    </location>
</feature>
<feature type="active site" evidence="1">
    <location>
        <position position="108"/>
    </location>
</feature>
<feature type="binding site" evidence="1">
    <location>
        <begin position="25"/>
        <end position="28"/>
    </location>
    <ligand>
        <name>NADP(+)</name>
        <dbReference type="ChEBI" id="CHEBI:58349"/>
    </ligand>
</feature>
<feature type="binding site" evidence="1">
    <location>
        <position position="51"/>
    </location>
    <ligand>
        <name>NADP(+)</name>
        <dbReference type="ChEBI" id="CHEBI:58349"/>
    </ligand>
</feature>
<feature type="binding site" evidence="1">
    <location>
        <position position="53"/>
    </location>
    <ligand>
        <name>NADP(+)</name>
        <dbReference type="ChEBI" id="CHEBI:58349"/>
    </ligand>
</feature>
<feature type="binding site" evidence="1">
    <location>
        <begin position="83"/>
        <end position="86"/>
    </location>
    <ligand>
        <name>NADP(+)</name>
        <dbReference type="ChEBI" id="CHEBI:58349"/>
    </ligand>
</feature>
<feature type="binding site" evidence="1">
    <location>
        <position position="134"/>
    </location>
    <ligand>
        <name>NADP(+)</name>
        <dbReference type="ChEBI" id="CHEBI:58349"/>
    </ligand>
</feature>
<feature type="binding site" evidence="1">
    <location>
        <position position="191"/>
    </location>
    <ligand>
        <name>Mg(2+)</name>
        <dbReference type="ChEBI" id="CHEBI:18420"/>
        <label>1</label>
    </ligand>
</feature>
<feature type="binding site" evidence="1">
    <location>
        <position position="191"/>
    </location>
    <ligand>
        <name>Mg(2+)</name>
        <dbReference type="ChEBI" id="CHEBI:18420"/>
        <label>2</label>
    </ligand>
</feature>
<feature type="binding site" evidence="1">
    <location>
        <position position="195"/>
    </location>
    <ligand>
        <name>Mg(2+)</name>
        <dbReference type="ChEBI" id="CHEBI:18420"/>
        <label>1</label>
    </ligand>
</feature>
<feature type="binding site" evidence="1">
    <location>
        <position position="227"/>
    </location>
    <ligand>
        <name>Mg(2+)</name>
        <dbReference type="ChEBI" id="CHEBI:18420"/>
        <label>2</label>
    </ligand>
</feature>
<feature type="binding site" evidence="1">
    <location>
        <position position="231"/>
    </location>
    <ligand>
        <name>Mg(2+)</name>
        <dbReference type="ChEBI" id="CHEBI:18420"/>
        <label>2</label>
    </ligand>
</feature>
<feature type="binding site" evidence="1">
    <location>
        <position position="252"/>
    </location>
    <ligand>
        <name>substrate</name>
    </ligand>
</feature>
<gene>
    <name evidence="1" type="primary">ilvC</name>
    <name type="ordered locus">CYB_1789</name>
</gene>
<dbReference type="EC" id="1.1.1.86" evidence="1"/>
<dbReference type="EMBL" id="CP000240">
    <property type="protein sequence ID" value="ABD02746.1"/>
    <property type="molecule type" value="Genomic_DNA"/>
</dbReference>
<dbReference type="RefSeq" id="WP_011433388.1">
    <property type="nucleotide sequence ID" value="NC_007776.1"/>
</dbReference>
<dbReference type="SMR" id="Q2JKN5"/>
<dbReference type="STRING" id="321332.CYB_1789"/>
<dbReference type="KEGG" id="cyb:CYB_1789"/>
<dbReference type="eggNOG" id="COG0059">
    <property type="taxonomic scope" value="Bacteria"/>
</dbReference>
<dbReference type="HOGENOM" id="CLU_033821_0_1_3"/>
<dbReference type="OrthoDB" id="9804088at2"/>
<dbReference type="UniPathway" id="UPA00047">
    <property type="reaction ID" value="UER00056"/>
</dbReference>
<dbReference type="UniPathway" id="UPA00049">
    <property type="reaction ID" value="UER00060"/>
</dbReference>
<dbReference type="Proteomes" id="UP000001938">
    <property type="component" value="Chromosome"/>
</dbReference>
<dbReference type="GO" id="GO:0005829">
    <property type="term" value="C:cytosol"/>
    <property type="evidence" value="ECO:0007669"/>
    <property type="project" value="TreeGrafter"/>
</dbReference>
<dbReference type="GO" id="GO:0004455">
    <property type="term" value="F:ketol-acid reductoisomerase activity"/>
    <property type="evidence" value="ECO:0007669"/>
    <property type="project" value="UniProtKB-UniRule"/>
</dbReference>
<dbReference type="GO" id="GO:0000287">
    <property type="term" value="F:magnesium ion binding"/>
    <property type="evidence" value="ECO:0007669"/>
    <property type="project" value="UniProtKB-UniRule"/>
</dbReference>
<dbReference type="GO" id="GO:0050661">
    <property type="term" value="F:NADP binding"/>
    <property type="evidence" value="ECO:0007669"/>
    <property type="project" value="InterPro"/>
</dbReference>
<dbReference type="GO" id="GO:0009097">
    <property type="term" value="P:isoleucine biosynthetic process"/>
    <property type="evidence" value="ECO:0007669"/>
    <property type="project" value="UniProtKB-UniRule"/>
</dbReference>
<dbReference type="GO" id="GO:0009099">
    <property type="term" value="P:L-valine biosynthetic process"/>
    <property type="evidence" value="ECO:0007669"/>
    <property type="project" value="UniProtKB-UniRule"/>
</dbReference>
<dbReference type="FunFam" id="3.40.50.720:FF:000023">
    <property type="entry name" value="Ketol-acid reductoisomerase (NADP(+))"/>
    <property type="match status" value="1"/>
</dbReference>
<dbReference type="Gene3D" id="6.10.240.10">
    <property type="match status" value="1"/>
</dbReference>
<dbReference type="Gene3D" id="3.40.50.720">
    <property type="entry name" value="NAD(P)-binding Rossmann-like Domain"/>
    <property type="match status" value="1"/>
</dbReference>
<dbReference type="HAMAP" id="MF_00435">
    <property type="entry name" value="IlvC"/>
    <property type="match status" value="1"/>
</dbReference>
<dbReference type="InterPro" id="IPR008927">
    <property type="entry name" value="6-PGluconate_DH-like_C_sf"/>
</dbReference>
<dbReference type="InterPro" id="IPR013023">
    <property type="entry name" value="KARI"/>
</dbReference>
<dbReference type="InterPro" id="IPR000506">
    <property type="entry name" value="KARI_C"/>
</dbReference>
<dbReference type="InterPro" id="IPR013116">
    <property type="entry name" value="KARI_N"/>
</dbReference>
<dbReference type="InterPro" id="IPR014359">
    <property type="entry name" value="KARI_prok"/>
</dbReference>
<dbReference type="InterPro" id="IPR036291">
    <property type="entry name" value="NAD(P)-bd_dom_sf"/>
</dbReference>
<dbReference type="NCBIfam" id="TIGR00465">
    <property type="entry name" value="ilvC"/>
    <property type="match status" value="1"/>
</dbReference>
<dbReference type="NCBIfam" id="NF004017">
    <property type="entry name" value="PRK05479.1"/>
    <property type="match status" value="1"/>
</dbReference>
<dbReference type="NCBIfam" id="NF009940">
    <property type="entry name" value="PRK13403.1"/>
    <property type="match status" value="1"/>
</dbReference>
<dbReference type="PANTHER" id="PTHR21371">
    <property type="entry name" value="KETOL-ACID REDUCTOISOMERASE, MITOCHONDRIAL"/>
    <property type="match status" value="1"/>
</dbReference>
<dbReference type="PANTHER" id="PTHR21371:SF1">
    <property type="entry name" value="KETOL-ACID REDUCTOISOMERASE, MITOCHONDRIAL"/>
    <property type="match status" value="1"/>
</dbReference>
<dbReference type="Pfam" id="PF01450">
    <property type="entry name" value="KARI_C"/>
    <property type="match status" value="1"/>
</dbReference>
<dbReference type="Pfam" id="PF07991">
    <property type="entry name" value="KARI_N"/>
    <property type="match status" value="1"/>
</dbReference>
<dbReference type="PIRSF" id="PIRSF000116">
    <property type="entry name" value="IlvC_gammaproteo"/>
    <property type="match status" value="1"/>
</dbReference>
<dbReference type="SUPFAM" id="SSF48179">
    <property type="entry name" value="6-phosphogluconate dehydrogenase C-terminal domain-like"/>
    <property type="match status" value="1"/>
</dbReference>
<dbReference type="SUPFAM" id="SSF51735">
    <property type="entry name" value="NAD(P)-binding Rossmann-fold domains"/>
    <property type="match status" value="1"/>
</dbReference>
<dbReference type="PROSITE" id="PS51851">
    <property type="entry name" value="KARI_C"/>
    <property type="match status" value="1"/>
</dbReference>
<dbReference type="PROSITE" id="PS51850">
    <property type="entry name" value="KARI_N"/>
    <property type="match status" value="1"/>
</dbReference>
<comment type="function">
    <text evidence="1">Involved in the biosynthesis of branched-chain amino acids (BCAA). Catalyzes an alkyl-migration followed by a ketol-acid reduction of (S)-2-acetolactate (S2AL) to yield (R)-2,3-dihydroxy-isovalerate. In the isomerase reaction, S2AL is rearranged via a Mg-dependent methyl migration to produce 3-hydroxy-3-methyl-2-ketobutyrate (HMKB). In the reductase reaction, this 2-ketoacid undergoes a metal-dependent reduction by NADPH to yield (R)-2,3-dihydroxy-isovalerate.</text>
</comment>
<comment type="catalytic activity">
    <reaction evidence="1">
        <text>(2R)-2,3-dihydroxy-3-methylbutanoate + NADP(+) = (2S)-2-acetolactate + NADPH + H(+)</text>
        <dbReference type="Rhea" id="RHEA:22068"/>
        <dbReference type="ChEBI" id="CHEBI:15378"/>
        <dbReference type="ChEBI" id="CHEBI:49072"/>
        <dbReference type="ChEBI" id="CHEBI:57783"/>
        <dbReference type="ChEBI" id="CHEBI:58349"/>
        <dbReference type="ChEBI" id="CHEBI:58476"/>
        <dbReference type="EC" id="1.1.1.86"/>
    </reaction>
</comment>
<comment type="catalytic activity">
    <reaction evidence="1">
        <text>(2R,3R)-2,3-dihydroxy-3-methylpentanoate + NADP(+) = (S)-2-ethyl-2-hydroxy-3-oxobutanoate + NADPH + H(+)</text>
        <dbReference type="Rhea" id="RHEA:13493"/>
        <dbReference type="ChEBI" id="CHEBI:15378"/>
        <dbReference type="ChEBI" id="CHEBI:49256"/>
        <dbReference type="ChEBI" id="CHEBI:49258"/>
        <dbReference type="ChEBI" id="CHEBI:57783"/>
        <dbReference type="ChEBI" id="CHEBI:58349"/>
        <dbReference type="EC" id="1.1.1.86"/>
    </reaction>
</comment>
<comment type="cofactor">
    <cofactor evidence="1">
        <name>Mg(2+)</name>
        <dbReference type="ChEBI" id="CHEBI:18420"/>
    </cofactor>
    <text evidence="1">Binds 2 magnesium ions per subunit.</text>
</comment>
<comment type="pathway">
    <text evidence="1">Amino-acid biosynthesis; L-isoleucine biosynthesis; L-isoleucine from 2-oxobutanoate: step 2/4.</text>
</comment>
<comment type="pathway">
    <text evidence="1">Amino-acid biosynthesis; L-valine biosynthesis; L-valine from pyruvate: step 2/4.</text>
</comment>
<comment type="similarity">
    <text evidence="1">Belongs to the ketol-acid reductoisomerase family.</text>
</comment>
<protein>
    <recommendedName>
        <fullName evidence="1">Ketol-acid reductoisomerase (NADP(+))</fullName>
        <shortName evidence="1">KARI</shortName>
        <ecNumber evidence="1">1.1.1.86</ecNumber>
    </recommendedName>
    <alternativeName>
        <fullName evidence="1">Acetohydroxy-acid isomeroreductase</fullName>
        <shortName evidence="1">AHIR</shortName>
    </alternativeName>
    <alternativeName>
        <fullName evidence="1">Alpha-keto-beta-hydroxylacyl reductoisomerase</fullName>
    </alternativeName>
    <alternativeName>
        <fullName evidence="1">Ketol-acid reductoisomerase type 1</fullName>
    </alternativeName>
    <alternativeName>
        <fullName evidence="1">Ketol-acid reductoisomerase type I</fullName>
    </alternativeName>
</protein>
<evidence type="ECO:0000255" key="1">
    <source>
        <dbReference type="HAMAP-Rule" id="MF_00435"/>
    </source>
</evidence>
<evidence type="ECO:0000255" key="2">
    <source>
        <dbReference type="PROSITE-ProRule" id="PRU01197"/>
    </source>
</evidence>
<evidence type="ECO:0000255" key="3">
    <source>
        <dbReference type="PROSITE-ProRule" id="PRU01198"/>
    </source>
</evidence>
<sequence length="330" mass="36278">MARLYYDTDANLEPLADKTVAIIGYGSQGHAHALNLRDSGVQVIVGLYPGSPSWPKAEQDGLMVKTVADAAAAADWVMILLPDEVQKAVFQGEIRPHLQPGNVLLFAHGFNIHFGQIQPPANVDVIMVAPKGPGHLVRRTYQAGEGVPCLFAVYQDASGMARERAMAYAKAIGGTRAGILETTFREETETDLFGEQVVLCGGLTALIKAGFETLVEAGYQPELAYFECLHEVKLIVDLIVEGGLEKMRHSISNTAEYGDYTRGPRIITEQTRAEMKRILAEIQSGQFAREFVLENQAGKPGLTAMRRREAEHPIEQVGRELRAMFSWLKK</sequence>